<evidence type="ECO:0000255" key="1">
    <source>
        <dbReference type="HAMAP-Rule" id="MF_01188"/>
    </source>
</evidence>
<evidence type="ECO:0000256" key="2">
    <source>
        <dbReference type="SAM" id="MobiDB-lite"/>
    </source>
</evidence>
<reference key="1">
    <citation type="journal article" date="2005" name="Nucleic Acids Res.">
        <title>The genome sequence of Salmonella enterica serovar Choleraesuis, a highly invasive and resistant zoonotic pathogen.</title>
        <authorList>
            <person name="Chiu C.-H."/>
            <person name="Tang P."/>
            <person name="Chu C."/>
            <person name="Hu S."/>
            <person name="Bao Q."/>
            <person name="Yu J."/>
            <person name="Chou Y.-Y."/>
            <person name="Wang H.-S."/>
            <person name="Lee Y.-S."/>
        </authorList>
    </citation>
    <scope>NUCLEOTIDE SEQUENCE [LARGE SCALE GENOMIC DNA]</scope>
    <source>
        <strain>SC-B67</strain>
    </source>
</reference>
<proteinExistence type="inferred from homology"/>
<comment type="similarity">
    <text evidence="1">Belongs to the UPF0441 family.</text>
</comment>
<accession>Q57JS5</accession>
<gene>
    <name evidence="1" type="primary">ygiB</name>
    <name type="ordered locus">SCH_3131</name>
</gene>
<organism>
    <name type="scientific">Salmonella choleraesuis (strain SC-B67)</name>
    <dbReference type="NCBI Taxonomy" id="321314"/>
    <lineage>
        <taxon>Bacteria</taxon>
        <taxon>Pseudomonadati</taxon>
        <taxon>Pseudomonadota</taxon>
        <taxon>Gammaproteobacteria</taxon>
        <taxon>Enterobacterales</taxon>
        <taxon>Enterobacteriaceae</taxon>
        <taxon>Salmonella</taxon>
    </lineage>
</organism>
<feature type="chain" id="PRO_0000293639" description="UPF0441 protein YgiB">
    <location>
        <begin position="1"/>
        <end position="223"/>
    </location>
</feature>
<feature type="region of interest" description="Disordered" evidence="2">
    <location>
        <begin position="178"/>
        <end position="223"/>
    </location>
</feature>
<feature type="compositionally biased region" description="Low complexity" evidence="2">
    <location>
        <begin position="178"/>
        <end position="195"/>
    </location>
</feature>
<feature type="compositionally biased region" description="Polar residues" evidence="2">
    <location>
        <begin position="204"/>
        <end position="223"/>
    </location>
</feature>
<protein>
    <recommendedName>
        <fullName evidence="1">UPF0441 protein YgiB</fullName>
    </recommendedName>
</protein>
<dbReference type="EMBL" id="AE017220">
    <property type="protein sequence ID" value="AAX67037.1"/>
    <property type="molecule type" value="Genomic_DNA"/>
</dbReference>
<dbReference type="RefSeq" id="WP_000831528.1">
    <property type="nucleotide sequence ID" value="NC_006905.1"/>
</dbReference>
<dbReference type="KEGG" id="sec:SCH_3131"/>
<dbReference type="HOGENOM" id="CLU_095624_0_0_6"/>
<dbReference type="Proteomes" id="UP000000538">
    <property type="component" value="Chromosome"/>
</dbReference>
<dbReference type="HAMAP" id="MF_01188">
    <property type="entry name" value="UPF0441"/>
    <property type="match status" value="1"/>
</dbReference>
<dbReference type="InterPro" id="IPR009576">
    <property type="entry name" value="Biofilm_formation_YgiB"/>
</dbReference>
<dbReference type="NCBIfam" id="NF008655">
    <property type="entry name" value="PRK11653.1"/>
    <property type="match status" value="1"/>
</dbReference>
<dbReference type="Pfam" id="PF06693">
    <property type="entry name" value="DUF1190"/>
    <property type="match status" value="1"/>
</dbReference>
<name>YGIB_SALCH</name>
<sequence length="223" mass="23387">MKRTKSIHHASFRKSWSARHLTPVALAVTAVFMLAGCEKSDETVSLYQNADDCSAANPGKSAECTTAYNNALKEAERTAPKYATREDCVAEFGEGQCQQAPAQAGMAPENQAQAQQSSGSFWMPLMAGYMMGRLMGGGAGFAQQPLFSSKNPASPAYGKYTDAAGKNYGAAQPGRTMTVPKTAMAPKPATTTTVTRGGFGESVAKQSTMQRSAAGTSTRSMGG</sequence>